<protein>
    <recommendedName>
        <fullName evidence="1">Pescadillo homolog</fullName>
    </recommendedName>
</protein>
<keyword id="KW-0539">Nucleus</keyword>
<keyword id="KW-1185">Reference proteome</keyword>
<keyword id="KW-0690">Ribosome biogenesis</keyword>
<keyword id="KW-0698">rRNA processing</keyword>
<dbReference type="EMBL" id="CR759982">
    <property type="protein sequence ID" value="CAJ82755.1"/>
    <property type="molecule type" value="mRNA"/>
</dbReference>
<dbReference type="EMBL" id="BC064875">
    <property type="protein sequence ID" value="AAH64875.1"/>
    <property type="molecule type" value="mRNA"/>
</dbReference>
<dbReference type="EMBL" id="BC076991">
    <property type="protein sequence ID" value="AAH76991.1"/>
    <property type="molecule type" value="mRNA"/>
</dbReference>
<dbReference type="RefSeq" id="NP_989410.1">
    <property type="nucleotide sequence ID" value="NM_204079.1"/>
</dbReference>
<dbReference type="RefSeq" id="XP_031753331.1">
    <property type="nucleotide sequence ID" value="XM_031897471.1"/>
</dbReference>
<dbReference type="SMR" id="Q6DEV3"/>
<dbReference type="FunCoup" id="Q6DEV3">
    <property type="interactions" value="3384"/>
</dbReference>
<dbReference type="STRING" id="8364.ENSXETP00000030377"/>
<dbReference type="DNASU" id="395049"/>
<dbReference type="GeneID" id="395049"/>
<dbReference type="KEGG" id="xtr:395049"/>
<dbReference type="AGR" id="Xenbase:XB-GENE-480670"/>
<dbReference type="CTD" id="23481"/>
<dbReference type="Xenbase" id="XB-GENE-480670">
    <property type="gene designation" value="pes1"/>
</dbReference>
<dbReference type="InParanoid" id="Q6DEV3"/>
<dbReference type="OrthoDB" id="10264910at2759"/>
<dbReference type="Reactome" id="R-XTR-6791226">
    <property type="pathway name" value="Major pathway of rRNA processing in the nucleolus and cytosol"/>
</dbReference>
<dbReference type="Proteomes" id="UP000008143">
    <property type="component" value="Chromosome 1"/>
</dbReference>
<dbReference type="GO" id="GO:0005730">
    <property type="term" value="C:nucleolus"/>
    <property type="evidence" value="ECO:0000250"/>
    <property type="project" value="UniProtKB"/>
</dbReference>
<dbReference type="GO" id="GO:0005654">
    <property type="term" value="C:nucleoplasm"/>
    <property type="evidence" value="ECO:0000250"/>
    <property type="project" value="UniProtKB"/>
</dbReference>
<dbReference type="GO" id="GO:0070545">
    <property type="term" value="C:PeBoW complex"/>
    <property type="evidence" value="ECO:0000250"/>
    <property type="project" value="UniProtKB"/>
</dbReference>
<dbReference type="GO" id="GO:0030687">
    <property type="term" value="C:preribosome, large subunit precursor"/>
    <property type="evidence" value="ECO:0000250"/>
    <property type="project" value="UniProtKB"/>
</dbReference>
<dbReference type="GO" id="GO:0043021">
    <property type="term" value="F:ribonucleoprotein complex binding"/>
    <property type="evidence" value="ECO:0007669"/>
    <property type="project" value="UniProtKB-UniRule"/>
</dbReference>
<dbReference type="GO" id="GO:0000466">
    <property type="term" value="P:maturation of 5.8S rRNA from tricistronic rRNA transcript (SSU-rRNA, 5.8S rRNA, LSU-rRNA)"/>
    <property type="evidence" value="ECO:0000250"/>
    <property type="project" value="UniProtKB"/>
</dbReference>
<dbReference type="GO" id="GO:0000463">
    <property type="term" value="P:maturation of LSU-rRNA from tricistronic rRNA transcript (SSU-rRNA, 5.8S rRNA, LSU-rRNA)"/>
    <property type="evidence" value="ECO:0000250"/>
    <property type="project" value="UniProtKB"/>
</dbReference>
<dbReference type="GO" id="GO:0051726">
    <property type="term" value="P:regulation of cell cycle"/>
    <property type="evidence" value="ECO:0000250"/>
    <property type="project" value="UniProtKB"/>
</dbReference>
<dbReference type="CDD" id="cd17709">
    <property type="entry name" value="BRCT_pescadillo_like"/>
    <property type="match status" value="1"/>
</dbReference>
<dbReference type="FunFam" id="3.40.50.10190:FF:000002">
    <property type="entry name" value="Pescadillo homolog"/>
    <property type="match status" value="1"/>
</dbReference>
<dbReference type="Gene3D" id="3.40.50.10190">
    <property type="entry name" value="BRCT domain"/>
    <property type="match status" value="1"/>
</dbReference>
<dbReference type="HAMAP" id="MF_03028">
    <property type="entry name" value="Pescadillo"/>
    <property type="match status" value="1"/>
</dbReference>
<dbReference type="InterPro" id="IPR001357">
    <property type="entry name" value="BRCT_dom"/>
</dbReference>
<dbReference type="InterPro" id="IPR036420">
    <property type="entry name" value="BRCT_dom_sf"/>
</dbReference>
<dbReference type="InterPro" id="IPR010613">
    <property type="entry name" value="PES"/>
</dbReference>
<dbReference type="PANTHER" id="PTHR12221">
    <property type="entry name" value="PESCADILLO - RELATED"/>
    <property type="match status" value="1"/>
</dbReference>
<dbReference type="PANTHER" id="PTHR12221:SF6">
    <property type="entry name" value="PESCADILLO HOMOLOG"/>
    <property type="match status" value="1"/>
</dbReference>
<dbReference type="Pfam" id="PF16589">
    <property type="entry name" value="BRCT_2"/>
    <property type="match status" value="1"/>
</dbReference>
<dbReference type="Pfam" id="PF06732">
    <property type="entry name" value="Pescadillo_N"/>
    <property type="match status" value="1"/>
</dbReference>
<dbReference type="SMART" id="SM00292">
    <property type="entry name" value="BRCT"/>
    <property type="match status" value="1"/>
</dbReference>
<dbReference type="SUPFAM" id="SSF52113">
    <property type="entry name" value="BRCT domain"/>
    <property type="match status" value="1"/>
</dbReference>
<dbReference type="PROSITE" id="PS50172">
    <property type="entry name" value="BRCT"/>
    <property type="match status" value="1"/>
</dbReference>
<name>PESC_XENTR</name>
<gene>
    <name type="primary">pes1</name>
    <name type="ORF">TNeu102a04.1</name>
</gene>
<accession>Q6DEV3</accession>
<accession>Q28JA9</accession>
<accession>Q6P1T6</accession>
<comment type="function">
    <text evidence="1">Component of the PeBoW complex, which is required for maturation of 28S and 5.8S ribosomal RNAs and formation of the 60S ribosome.</text>
</comment>
<comment type="subunit">
    <text evidence="1">Component of the PeBoW complex, composed of bop1, pes1 and wdr12. The complex is held together by bop1, which interacts with pes1 via its N-terminal domain and with wdr12 via a high-affinity interaction between the seven-bladed beta-propeller domains of the 2 proteins. The PeBoW complex associates with the 66S pre-ribosome.</text>
</comment>
<comment type="subcellular location">
    <subcellularLocation>
        <location evidence="1">Nucleus</location>
        <location evidence="1">Nucleolus</location>
    </subcellularLocation>
    <subcellularLocation>
        <location evidence="1">Nucleus</location>
        <location evidence="1">Nucleoplasm</location>
    </subcellularLocation>
</comment>
<comment type="similarity">
    <text evidence="1">Belongs to the pescadillo family.</text>
</comment>
<proteinExistence type="evidence at transcript level"/>
<evidence type="ECO:0000255" key="1">
    <source>
        <dbReference type="HAMAP-Rule" id="MF_03028"/>
    </source>
</evidence>
<evidence type="ECO:0000256" key="2">
    <source>
        <dbReference type="SAM" id="MobiDB-lite"/>
    </source>
</evidence>
<evidence type="ECO:0000305" key="3"/>
<organism>
    <name type="scientific">Xenopus tropicalis</name>
    <name type="common">Western clawed frog</name>
    <name type="synonym">Silurana tropicalis</name>
    <dbReference type="NCBI Taxonomy" id="8364"/>
    <lineage>
        <taxon>Eukaryota</taxon>
        <taxon>Metazoa</taxon>
        <taxon>Chordata</taxon>
        <taxon>Craniata</taxon>
        <taxon>Vertebrata</taxon>
        <taxon>Euteleostomi</taxon>
        <taxon>Amphibia</taxon>
        <taxon>Batrachia</taxon>
        <taxon>Anura</taxon>
        <taxon>Pipoidea</taxon>
        <taxon>Pipidae</taxon>
        <taxon>Xenopodinae</taxon>
        <taxon>Xenopus</taxon>
        <taxon>Silurana</taxon>
    </lineage>
</organism>
<feature type="chain" id="PRO_0000370448" description="Pescadillo homolog">
    <location>
        <begin position="1"/>
        <end position="580"/>
    </location>
</feature>
<feature type="domain" description="BRCT" evidence="1">
    <location>
        <begin position="323"/>
        <end position="416"/>
    </location>
</feature>
<feature type="region of interest" description="Disordered" evidence="2">
    <location>
        <begin position="291"/>
        <end position="321"/>
    </location>
</feature>
<feature type="region of interest" description="Disordered" evidence="2">
    <location>
        <begin position="448"/>
        <end position="496"/>
    </location>
</feature>
<feature type="compositionally biased region" description="Acidic residues" evidence="2">
    <location>
        <begin position="291"/>
        <end position="303"/>
    </location>
</feature>
<feature type="compositionally biased region" description="Basic and acidic residues" evidence="2">
    <location>
        <begin position="312"/>
        <end position="321"/>
    </location>
</feature>
<feature type="compositionally biased region" description="Acidic residues" evidence="2">
    <location>
        <begin position="452"/>
        <end position="483"/>
    </location>
</feature>
<feature type="compositionally biased region" description="Basic and acidic residues" evidence="2">
    <location>
        <begin position="484"/>
        <end position="494"/>
    </location>
</feature>
<feature type="sequence conflict" description="In Ref. 2; AAH64875." evidence="3" ref="2">
    <original>P</original>
    <variation>PE</variation>
    <location>
        <position position="452"/>
    </location>
</feature>
<feature type="sequence conflict" description="In Ref. 1; CAJ82755." evidence="3" ref="1">
    <location>
        <begin position="460"/>
        <end position="466"/>
    </location>
</feature>
<feature type="sequence conflict" description="In Ref. 1; CAJ82755." evidence="3" ref="1">
    <original>K</original>
    <variation>E</variation>
    <location>
        <position position="538"/>
    </location>
</feature>
<sequence length="580" mass="68001">MGGLEKKKYERGSATNYITRNKARKKLQLSLPDFRRLCILKGIYPHEPKHKKKVNKGSTAPRTFYLLKDIKFLLHEPIVGKFREYKVFVRRLRKAYGKREWDAVDRIRDNKPAYKLDHIIKERYPTFIDAVRDLDDALSMCFLFSTFPRTGKCHVQTIQLCRRLSVEFLNYVIASRSLRKVFLSIKGIYYQADILGQTVTWITPYAFSHDHPTDVDYRVMATFTEFYTTLLGFVNFRLYQTLNLQYPPKLDYFSEADLKSDNEDKYALETEAYMEKLAALSASLSRVIPSEPEEENEVDEFPADPENAGQEEEQKKQLQEEEKHKSMFVGLKFFLNREVPRDALAFIIRSFGGEVSWDASVCIGATYNSANPSITHHIVDRPSIQTQIINRYYLQPQWVFDCVNARMLLPVEDYFPGVLLPPHLSPFVQEKEGDYIPPEKLRLMALQKGENPEDDDDDDEEDDEDEEEDDEDEDDEENEEEEEDKKLRHLENKKVGQNKLNVRITAGKVKVEDRTQAAEQEKTEEKRLAIMMMKKKEKYLYNKIMFGKKRKVREANKLALKRKAHDESVKVERKKKAKKH</sequence>
<reference key="1">
    <citation type="submission" date="2006-10" db="EMBL/GenBank/DDBJ databases">
        <authorList>
            <consortium name="Sanger Xenopus tropicalis EST/cDNA project"/>
        </authorList>
    </citation>
    <scope>NUCLEOTIDE SEQUENCE [LARGE SCALE MRNA]</scope>
    <source>
        <tissue>Neurula</tissue>
    </source>
</reference>
<reference key="2">
    <citation type="submission" date="2004-07" db="EMBL/GenBank/DDBJ databases">
        <authorList>
            <consortium name="NIH - Xenopus Gene Collection (XGC) project"/>
        </authorList>
    </citation>
    <scope>NUCLEOTIDE SEQUENCE [LARGE SCALE MRNA]</scope>
    <source>
        <tissue>Embryo</tissue>
    </source>
</reference>